<evidence type="ECO:0000255" key="1">
    <source>
        <dbReference type="HAMAP-Rule" id="MF_01283"/>
    </source>
</evidence>
<feature type="chain" id="PRO_1000067412" description="Riboflavin biosynthesis protein RibBA">
    <location>
        <begin position="1"/>
        <end position="401"/>
    </location>
</feature>
<feature type="region of interest" description="DHBP synthase">
    <location>
        <begin position="1"/>
        <end position="203"/>
    </location>
</feature>
<feature type="region of interest" description="GTP cyclohydrolase II">
    <location>
        <begin position="204"/>
        <end position="401"/>
    </location>
</feature>
<feature type="active site" description="Proton acceptor; for GTP cyclohydrolase activity" evidence="1">
    <location>
        <position position="331"/>
    </location>
</feature>
<feature type="active site" description="Nucleophile; for GTP cyclohydrolase activity" evidence="1">
    <location>
        <position position="333"/>
    </location>
</feature>
<feature type="binding site" evidence="1">
    <location>
        <begin position="30"/>
        <end position="31"/>
    </location>
    <ligand>
        <name>D-ribulose 5-phosphate</name>
        <dbReference type="ChEBI" id="CHEBI:58121"/>
    </ligand>
</feature>
<feature type="binding site" evidence="1">
    <location>
        <position position="31"/>
    </location>
    <ligand>
        <name>Mg(2+)</name>
        <dbReference type="ChEBI" id="CHEBI:18420"/>
        <label>1</label>
    </ligand>
</feature>
<feature type="binding site" evidence="1">
    <location>
        <position position="31"/>
    </location>
    <ligand>
        <name>Mg(2+)</name>
        <dbReference type="ChEBI" id="CHEBI:18420"/>
        <label>2</label>
    </ligand>
</feature>
<feature type="binding site" evidence="1">
    <location>
        <position position="35"/>
    </location>
    <ligand>
        <name>D-ribulose 5-phosphate</name>
        <dbReference type="ChEBI" id="CHEBI:58121"/>
    </ligand>
</feature>
<feature type="binding site" evidence="1">
    <location>
        <begin position="142"/>
        <end position="146"/>
    </location>
    <ligand>
        <name>D-ribulose 5-phosphate</name>
        <dbReference type="ChEBI" id="CHEBI:58121"/>
    </ligand>
</feature>
<feature type="binding site" evidence="1">
    <location>
        <position position="145"/>
    </location>
    <ligand>
        <name>Mg(2+)</name>
        <dbReference type="ChEBI" id="CHEBI:18420"/>
        <label>2</label>
    </ligand>
</feature>
<feature type="binding site" evidence="1">
    <location>
        <position position="166"/>
    </location>
    <ligand>
        <name>D-ribulose 5-phosphate</name>
        <dbReference type="ChEBI" id="CHEBI:58121"/>
    </ligand>
</feature>
<feature type="binding site" evidence="1">
    <location>
        <begin position="254"/>
        <end position="258"/>
    </location>
    <ligand>
        <name>GTP</name>
        <dbReference type="ChEBI" id="CHEBI:37565"/>
    </ligand>
</feature>
<feature type="binding site" evidence="1">
    <location>
        <position position="259"/>
    </location>
    <ligand>
        <name>Zn(2+)</name>
        <dbReference type="ChEBI" id="CHEBI:29105"/>
        <note>catalytic</note>
    </ligand>
</feature>
<feature type="binding site" evidence="1">
    <location>
        <position position="270"/>
    </location>
    <ligand>
        <name>Zn(2+)</name>
        <dbReference type="ChEBI" id="CHEBI:29105"/>
        <note>catalytic</note>
    </ligand>
</feature>
<feature type="binding site" evidence="1">
    <location>
        <position position="272"/>
    </location>
    <ligand>
        <name>Zn(2+)</name>
        <dbReference type="ChEBI" id="CHEBI:29105"/>
        <note>catalytic</note>
    </ligand>
</feature>
<feature type="binding site" evidence="1">
    <location>
        <position position="275"/>
    </location>
    <ligand>
        <name>GTP</name>
        <dbReference type="ChEBI" id="CHEBI:37565"/>
    </ligand>
</feature>
<feature type="binding site" evidence="1">
    <location>
        <begin position="297"/>
        <end position="299"/>
    </location>
    <ligand>
        <name>GTP</name>
        <dbReference type="ChEBI" id="CHEBI:37565"/>
    </ligand>
</feature>
<feature type="binding site" evidence="1">
    <location>
        <position position="319"/>
    </location>
    <ligand>
        <name>GTP</name>
        <dbReference type="ChEBI" id="CHEBI:37565"/>
    </ligand>
</feature>
<feature type="binding site" evidence="1">
    <location>
        <position position="354"/>
    </location>
    <ligand>
        <name>GTP</name>
        <dbReference type="ChEBI" id="CHEBI:37565"/>
    </ligand>
</feature>
<feature type="binding site" evidence="1">
    <location>
        <position position="359"/>
    </location>
    <ligand>
        <name>GTP</name>
        <dbReference type="ChEBI" id="CHEBI:37565"/>
    </ligand>
</feature>
<feature type="site" description="Essential for DHBP synthase activity" evidence="1">
    <location>
        <position position="128"/>
    </location>
</feature>
<feature type="site" description="Essential for DHBP synthase activity" evidence="1">
    <location>
        <position position="166"/>
    </location>
</feature>
<dbReference type="EC" id="4.1.99.12" evidence="1"/>
<dbReference type="EC" id="3.5.4.25" evidence="1"/>
<dbReference type="EMBL" id="CP000569">
    <property type="protein sequence ID" value="ABN73488.1"/>
    <property type="molecule type" value="Genomic_DNA"/>
</dbReference>
<dbReference type="RefSeq" id="WP_009875161.1">
    <property type="nucleotide sequence ID" value="NC_009053.1"/>
</dbReference>
<dbReference type="SMR" id="A3MZA2"/>
<dbReference type="STRING" id="416269.APL_0384"/>
<dbReference type="EnsemblBacteria" id="ABN73488">
    <property type="protein sequence ID" value="ABN73488"/>
    <property type="gene ID" value="APL_0384"/>
</dbReference>
<dbReference type="KEGG" id="apl:APL_0384"/>
<dbReference type="eggNOG" id="COG0108">
    <property type="taxonomic scope" value="Bacteria"/>
</dbReference>
<dbReference type="eggNOG" id="COG0807">
    <property type="taxonomic scope" value="Bacteria"/>
</dbReference>
<dbReference type="HOGENOM" id="CLU_020273_1_2_6"/>
<dbReference type="UniPathway" id="UPA00275">
    <property type="reaction ID" value="UER00399"/>
</dbReference>
<dbReference type="UniPathway" id="UPA00275">
    <property type="reaction ID" value="UER00400"/>
</dbReference>
<dbReference type="Proteomes" id="UP000001432">
    <property type="component" value="Chromosome"/>
</dbReference>
<dbReference type="GO" id="GO:0005829">
    <property type="term" value="C:cytosol"/>
    <property type="evidence" value="ECO:0007669"/>
    <property type="project" value="TreeGrafter"/>
</dbReference>
<dbReference type="GO" id="GO:0008686">
    <property type="term" value="F:3,4-dihydroxy-2-butanone-4-phosphate synthase activity"/>
    <property type="evidence" value="ECO:0007669"/>
    <property type="project" value="UniProtKB-UniRule"/>
</dbReference>
<dbReference type="GO" id="GO:0005525">
    <property type="term" value="F:GTP binding"/>
    <property type="evidence" value="ECO:0007669"/>
    <property type="project" value="UniProtKB-KW"/>
</dbReference>
<dbReference type="GO" id="GO:0003935">
    <property type="term" value="F:GTP cyclohydrolase II activity"/>
    <property type="evidence" value="ECO:0007669"/>
    <property type="project" value="UniProtKB-UniRule"/>
</dbReference>
<dbReference type="GO" id="GO:0000287">
    <property type="term" value="F:magnesium ion binding"/>
    <property type="evidence" value="ECO:0007669"/>
    <property type="project" value="UniProtKB-UniRule"/>
</dbReference>
<dbReference type="GO" id="GO:0030145">
    <property type="term" value="F:manganese ion binding"/>
    <property type="evidence" value="ECO:0007669"/>
    <property type="project" value="UniProtKB-UniRule"/>
</dbReference>
<dbReference type="GO" id="GO:0008270">
    <property type="term" value="F:zinc ion binding"/>
    <property type="evidence" value="ECO:0007669"/>
    <property type="project" value="UniProtKB-UniRule"/>
</dbReference>
<dbReference type="GO" id="GO:0009231">
    <property type="term" value="P:riboflavin biosynthetic process"/>
    <property type="evidence" value="ECO:0007669"/>
    <property type="project" value="UniProtKB-UniRule"/>
</dbReference>
<dbReference type="CDD" id="cd00641">
    <property type="entry name" value="GTP_cyclohydro2"/>
    <property type="match status" value="1"/>
</dbReference>
<dbReference type="FunFam" id="3.40.50.10990:FF:000002">
    <property type="entry name" value="GTP cyclohydrolase-2"/>
    <property type="match status" value="1"/>
</dbReference>
<dbReference type="FunFam" id="3.90.870.10:FF:000001">
    <property type="entry name" value="Riboflavin biosynthesis protein RibBA"/>
    <property type="match status" value="1"/>
</dbReference>
<dbReference type="Gene3D" id="3.90.870.10">
    <property type="entry name" value="DHBP synthase"/>
    <property type="match status" value="1"/>
</dbReference>
<dbReference type="Gene3D" id="3.40.50.10990">
    <property type="entry name" value="GTP cyclohydrolase II"/>
    <property type="match status" value="1"/>
</dbReference>
<dbReference type="HAMAP" id="MF_00179">
    <property type="entry name" value="RibA"/>
    <property type="match status" value="1"/>
</dbReference>
<dbReference type="HAMAP" id="MF_00180">
    <property type="entry name" value="RibB"/>
    <property type="match status" value="1"/>
</dbReference>
<dbReference type="HAMAP" id="MF_01283">
    <property type="entry name" value="RibBA"/>
    <property type="match status" value="1"/>
</dbReference>
<dbReference type="InterPro" id="IPR017945">
    <property type="entry name" value="DHBP_synth_RibB-like_a/b_dom"/>
</dbReference>
<dbReference type="InterPro" id="IPR000422">
    <property type="entry name" value="DHBP_synthase_RibB"/>
</dbReference>
<dbReference type="InterPro" id="IPR032677">
    <property type="entry name" value="GTP_cyclohydro_II"/>
</dbReference>
<dbReference type="InterPro" id="IPR000926">
    <property type="entry name" value="RibA"/>
</dbReference>
<dbReference type="InterPro" id="IPR036144">
    <property type="entry name" value="RibA-like_sf"/>
</dbReference>
<dbReference type="InterPro" id="IPR016299">
    <property type="entry name" value="Riboflavin_synth_RibBA"/>
</dbReference>
<dbReference type="NCBIfam" id="NF001591">
    <property type="entry name" value="PRK00393.1"/>
    <property type="match status" value="1"/>
</dbReference>
<dbReference type="NCBIfam" id="NF006803">
    <property type="entry name" value="PRK09311.1"/>
    <property type="match status" value="1"/>
</dbReference>
<dbReference type="NCBIfam" id="TIGR00505">
    <property type="entry name" value="ribA"/>
    <property type="match status" value="1"/>
</dbReference>
<dbReference type="NCBIfam" id="TIGR00506">
    <property type="entry name" value="ribB"/>
    <property type="match status" value="1"/>
</dbReference>
<dbReference type="PANTHER" id="PTHR21327:SF18">
    <property type="entry name" value="3,4-DIHYDROXY-2-BUTANONE 4-PHOSPHATE SYNTHASE"/>
    <property type="match status" value="1"/>
</dbReference>
<dbReference type="PANTHER" id="PTHR21327">
    <property type="entry name" value="GTP CYCLOHYDROLASE II-RELATED"/>
    <property type="match status" value="1"/>
</dbReference>
<dbReference type="Pfam" id="PF00926">
    <property type="entry name" value="DHBP_synthase"/>
    <property type="match status" value="1"/>
</dbReference>
<dbReference type="Pfam" id="PF00925">
    <property type="entry name" value="GTP_cyclohydro2"/>
    <property type="match status" value="1"/>
</dbReference>
<dbReference type="PIRSF" id="PIRSF001259">
    <property type="entry name" value="RibA"/>
    <property type="match status" value="1"/>
</dbReference>
<dbReference type="SUPFAM" id="SSF142695">
    <property type="entry name" value="RibA-like"/>
    <property type="match status" value="1"/>
</dbReference>
<dbReference type="SUPFAM" id="SSF55821">
    <property type="entry name" value="YrdC/RibB"/>
    <property type="match status" value="1"/>
</dbReference>
<comment type="function">
    <text evidence="1">Catalyzes the conversion of D-ribulose 5-phosphate to formate and 3,4-dihydroxy-2-butanone 4-phosphate.</text>
</comment>
<comment type="function">
    <text evidence="1">Catalyzes the conversion of GTP to 2,5-diamino-6-ribosylamino-4(3H)-pyrimidinone 5'-phosphate (DARP), formate and pyrophosphate.</text>
</comment>
<comment type="catalytic activity">
    <reaction evidence="1">
        <text>D-ribulose 5-phosphate = (2S)-2-hydroxy-3-oxobutyl phosphate + formate + H(+)</text>
        <dbReference type="Rhea" id="RHEA:18457"/>
        <dbReference type="ChEBI" id="CHEBI:15378"/>
        <dbReference type="ChEBI" id="CHEBI:15740"/>
        <dbReference type="ChEBI" id="CHEBI:58121"/>
        <dbReference type="ChEBI" id="CHEBI:58830"/>
        <dbReference type="EC" id="4.1.99.12"/>
    </reaction>
</comment>
<comment type="catalytic activity">
    <reaction evidence="1">
        <text>GTP + 4 H2O = 2,5-diamino-6-hydroxy-4-(5-phosphoribosylamino)-pyrimidine + formate + 2 phosphate + 3 H(+)</text>
        <dbReference type="Rhea" id="RHEA:23704"/>
        <dbReference type="ChEBI" id="CHEBI:15377"/>
        <dbReference type="ChEBI" id="CHEBI:15378"/>
        <dbReference type="ChEBI" id="CHEBI:15740"/>
        <dbReference type="ChEBI" id="CHEBI:37565"/>
        <dbReference type="ChEBI" id="CHEBI:43474"/>
        <dbReference type="ChEBI" id="CHEBI:58614"/>
        <dbReference type="EC" id="3.5.4.25"/>
    </reaction>
</comment>
<comment type="cofactor">
    <cofactor evidence="1">
        <name>Mg(2+)</name>
        <dbReference type="ChEBI" id="CHEBI:18420"/>
    </cofactor>
    <cofactor evidence="1">
        <name>Mn(2+)</name>
        <dbReference type="ChEBI" id="CHEBI:29035"/>
    </cofactor>
    <text evidence="1">Binds 2 divalent metal cations per subunit. Magnesium or manganese.</text>
</comment>
<comment type="cofactor">
    <cofactor evidence="1">
        <name>Zn(2+)</name>
        <dbReference type="ChEBI" id="CHEBI:29105"/>
    </cofactor>
    <text evidence="1">Binds 1 zinc ion per subunit.</text>
</comment>
<comment type="pathway">
    <text evidence="1">Cofactor biosynthesis; riboflavin biosynthesis; 2-hydroxy-3-oxobutyl phosphate from D-ribulose 5-phosphate: step 1/1.</text>
</comment>
<comment type="pathway">
    <text evidence="1">Cofactor biosynthesis; riboflavin biosynthesis; 5-amino-6-(D-ribitylamino)uracil from GTP: step 1/4.</text>
</comment>
<comment type="similarity">
    <text evidence="1">In the N-terminal section; belongs to the DHBP synthase family.</text>
</comment>
<comment type="similarity">
    <text evidence="1">In the C-terminal section; belongs to the GTP cyclohydrolase II family.</text>
</comment>
<name>RIBBA_ACTP2</name>
<keyword id="KW-0342">GTP-binding</keyword>
<keyword id="KW-0378">Hydrolase</keyword>
<keyword id="KW-0456">Lyase</keyword>
<keyword id="KW-0460">Magnesium</keyword>
<keyword id="KW-0464">Manganese</keyword>
<keyword id="KW-0479">Metal-binding</keyword>
<keyword id="KW-0511">Multifunctional enzyme</keyword>
<keyword id="KW-0547">Nucleotide-binding</keyword>
<keyword id="KW-1185">Reference proteome</keyword>
<keyword id="KW-0686">Riboflavin biosynthesis</keyword>
<keyword id="KW-0862">Zinc</keyword>
<sequence>MTDFQFSKVEDAIEAIRQGKIILVTDDEDRENEGDFICAAEFATPENINFMATYGKGLICTPISTEIAKKLNFHPMVAVNQDNHETAFTVSVDHIDTGTGISAFERSITAMKIVDDNAKATDFRRPGHMFPLIAKEGGVLVRNGHTEATVDLARLAGLKHAGLCCEIMADDGTMMTMPDLQKFAVEHNMPFITIQQLQEYRRKHDSLVKQISVVKMPTKYGEFMAHSFVEVISGKEHVALVKGDLTDGEQVLARIHSECLTGDAFGSQRCDCGQQFAAAMTQIEQEGRGVILYLRQEGRGIGLINKLRAYELQDKGMDTVEANVALGFKEDEREYYIGAQMFQQLGVKSIRLLTNNPAKIEGLKEQGLNIVAREPIIVEPNKNDIDYLKVKQIKMGHMFNF</sequence>
<accession>A3MZA2</accession>
<reference key="1">
    <citation type="journal article" date="2008" name="J. Bacteriol.">
        <title>The complete genome sequence of Actinobacillus pleuropneumoniae L20 (serotype 5b).</title>
        <authorList>
            <person name="Foote S.J."/>
            <person name="Bosse J.T."/>
            <person name="Bouevitch A.B."/>
            <person name="Langford P.R."/>
            <person name="Young N.M."/>
            <person name="Nash J.H.E."/>
        </authorList>
    </citation>
    <scope>NUCLEOTIDE SEQUENCE [LARGE SCALE GENOMIC DNA]</scope>
    <source>
        <strain>L20</strain>
    </source>
</reference>
<proteinExistence type="inferred from homology"/>
<gene>
    <name evidence="1" type="primary">ribBA</name>
    <name type="ordered locus">APL_0384</name>
</gene>
<protein>
    <recommendedName>
        <fullName evidence="1">Riboflavin biosynthesis protein RibBA</fullName>
    </recommendedName>
    <domain>
        <recommendedName>
            <fullName evidence="1">3,4-dihydroxy-2-butanone 4-phosphate synthase</fullName>
            <shortName evidence="1">DHBP synthase</shortName>
            <ecNumber evidence="1">4.1.99.12</ecNumber>
        </recommendedName>
    </domain>
    <domain>
        <recommendedName>
            <fullName evidence="1">GTP cyclohydrolase-2</fullName>
            <ecNumber evidence="1">3.5.4.25</ecNumber>
        </recommendedName>
        <alternativeName>
            <fullName evidence="1">GTP cyclohydrolase II</fullName>
        </alternativeName>
    </domain>
</protein>
<organism>
    <name type="scientific">Actinobacillus pleuropneumoniae serotype 5b (strain L20)</name>
    <dbReference type="NCBI Taxonomy" id="416269"/>
    <lineage>
        <taxon>Bacteria</taxon>
        <taxon>Pseudomonadati</taxon>
        <taxon>Pseudomonadota</taxon>
        <taxon>Gammaproteobacteria</taxon>
        <taxon>Pasteurellales</taxon>
        <taxon>Pasteurellaceae</taxon>
        <taxon>Actinobacillus</taxon>
    </lineage>
</organism>